<gene>
    <name evidence="1" type="primary">valS</name>
    <name type="ordered locus">PTO0532</name>
</gene>
<protein>
    <recommendedName>
        <fullName evidence="1">Valine--tRNA ligase</fullName>
        <ecNumber evidence="1">6.1.1.9</ecNumber>
    </recommendedName>
    <alternativeName>
        <fullName evidence="1">Valyl-tRNA synthetase</fullName>
        <shortName evidence="1">ValRS</shortName>
    </alternativeName>
</protein>
<proteinExistence type="inferred from homology"/>
<dbReference type="EC" id="6.1.1.9" evidence="1"/>
<dbReference type="EMBL" id="AE017261">
    <property type="protein sequence ID" value="AAT43117.1"/>
    <property type="molecule type" value="Genomic_DNA"/>
</dbReference>
<dbReference type="RefSeq" id="WP_011177333.1">
    <property type="nucleotide sequence ID" value="NC_005877.1"/>
</dbReference>
<dbReference type="SMR" id="Q6L1N5"/>
<dbReference type="FunCoup" id="Q6L1N5">
    <property type="interactions" value="151"/>
</dbReference>
<dbReference type="STRING" id="263820.PTO0532"/>
<dbReference type="PaxDb" id="263820-PTO0532"/>
<dbReference type="GeneID" id="2845375"/>
<dbReference type="KEGG" id="pto:PTO0532"/>
<dbReference type="PATRIC" id="fig|263820.9.peg.560"/>
<dbReference type="eggNOG" id="arCOG00808">
    <property type="taxonomic scope" value="Archaea"/>
</dbReference>
<dbReference type="HOGENOM" id="CLU_001493_0_2_2"/>
<dbReference type="InParanoid" id="Q6L1N5"/>
<dbReference type="OrthoDB" id="23906at2157"/>
<dbReference type="Proteomes" id="UP000000438">
    <property type="component" value="Chromosome"/>
</dbReference>
<dbReference type="GO" id="GO:0005829">
    <property type="term" value="C:cytosol"/>
    <property type="evidence" value="ECO:0007669"/>
    <property type="project" value="TreeGrafter"/>
</dbReference>
<dbReference type="GO" id="GO:0002161">
    <property type="term" value="F:aminoacyl-tRNA deacylase activity"/>
    <property type="evidence" value="ECO:0007669"/>
    <property type="project" value="InterPro"/>
</dbReference>
<dbReference type="GO" id="GO:0005524">
    <property type="term" value="F:ATP binding"/>
    <property type="evidence" value="ECO:0007669"/>
    <property type="project" value="UniProtKB-UniRule"/>
</dbReference>
<dbReference type="GO" id="GO:0004832">
    <property type="term" value="F:valine-tRNA ligase activity"/>
    <property type="evidence" value="ECO:0007669"/>
    <property type="project" value="UniProtKB-UniRule"/>
</dbReference>
<dbReference type="GO" id="GO:0006438">
    <property type="term" value="P:valyl-tRNA aminoacylation"/>
    <property type="evidence" value="ECO:0007669"/>
    <property type="project" value="UniProtKB-UniRule"/>
</dbReference>
<dbReference type="CDD" id="cd07962">
    <property type="entry name" value="Anticodon_Ia_Val"/>
    <property type="match status" value="1"/>
</dbReference>
<dbReference type="Gene3D" id="3.40.50.620">
    <property type="entry name" value="HUPs"/>
    <property type="match status" value="2"/>
</dbReference>
<dbReference type="Gene3D" id="1.10.730.10">
    <property type="entry name" value="Isoleucyl-tRNA Synthetase, Domain 1"/>
    <property type="match status" value="1"/>
</dbReference>
<dbReference type="HAMAP" id="MF_02005">
    <property type="entry name" value="Val_tRNA_synth_type2"/>
    <property type="match status" value="1"/>
</dbReference>
<dbReference type="InterPro" id="IPR001412">
    <property type="entry name" value="aa-tRNA-synth_I_CS"/>
</dbReference>
<dbReference type="InterPro" id="IPR002300">
    <property type="entry name" value="aa-tRNA-synth_Ia"/>
</dbReference>
<dbReference type="InterPro" id="IPR033705">
    <property type="entry name" value="Anticodon_Ia_Val"/>
</dbReference>
<dbReference type="InterPro" id="IPR013155">
    <property type="entry name" value="M/V/L/I-tRNA-synth_anticd-bd"/>
</dbReference>
<dbReference type="InterPro" id="IPR014729">
    <property type="entry name" value="Rossmann-like_a/b/a_fold"/>
</dbReference>
<dbReference type="InterPro" id="IPR009080">
    <property type="entry name" value="tRNAsynth_Ia_anticodon-bd"/>
</dbReference>
<dbReference type="InterPro" id="IPR009008">
    <property type="entry name" value="Val/Leu/Ile-tRNA-synth_edit"/>
</dbReference>
<dbReference type="InterPro" id="IPR022874">
    <property type="entry name" value="Valine-tRNA_ligase_type_2"/>
</dbReference>
<dbReference type="InterPro" id="IPR002303">
    <property type="entry name" value="Valyl-tRNA_ligase"/>
</dbReference>
<dbReference type="NCBIfam" id="NF009687">
    <property type="entry name" value="PRK13208.1"/>
    <property type="match status" value="1"/>
</dbReference>
<dbReference type="NCBIfam" id="TIGR00422">
    <property type="entry name" value="valS"/>
    <property type="match status" value="1"/>
</dbReference>
<dbReference type="PANTHER" id="PTHR11946:SF93">
    <property type="entry name" value="VALINE--TRNA LIGASE, CHLOROPLASTIC_MITOCHONDRIAL 2"/>
    <property type="match status" value="1"/>
</dbReference>
<dbReference type="PANTHER" id="PTHR11946">
    <property type="entry name" value="VALYL-TRNA SYNTHETASES"/>
    <property type="match status" value="1"/>
</dbReference>
<dbReference type="Pfam" id="PF08264">
    <property type="entry name" value="Anticodon_1"/>
    <property type="match status" value="1"/>
</dbReference>
<dbReference type="Pfam" id="PF00133">
    <property type="entry name" value="tRNA-synt_1"/>
    <property type="match status" value="1"/>
</dbReference>
<dbReference type="PRINTS" id="PR00986">
    <property type="entry name" value="TRNASYNTHVAL"/>
</dbReference>
<dbReference type="SUPFAM" id="SSF47323">
    <property type="entry name" value="Anticodon-binding domain of a subclass of class I aminoacyl-tRNA synthetases"/>
    <property type="match status" value="1"/>
</dbReference>
<dbReference type="SUPFAM" id="SSF52374">
    <property type="entry name" value="Nucleotidylyl transferase"/>
    <property type="match status" value="1"/>
</dbReference>
<dbReference type="SUPFAM" id="SSF50677">
    <property type="entry name" value="ValRS/IleRS/LeuRS editing domain"/>
    <property type="match status" value="1"/>
</dbReference>
<dbReference type="PROSITE" id="PS00178">
    <property type="entry name" value="AA_TRNA_LIGASE_I"/>
    <property type="match status" value="1"/>
</dbReference>
<accession>Q6L1N5</accession>
<feature type="chain" id="PRO_0000224630" description="Valine--tRNA ligase">
    <location>
        <begin position="1"/>
        <end position="768"/>
    </location>
</feature>
<feature type="short sequence motif" description="'HIGH' region">
    <location>
        <begin position="37"/>
        <end position="47"/>
    </location>
</feature>
<feature type="short sequence motif" description="'KMSKS' region">
    <location>
        <begin position="510"/>
        <end position="514"/>
    </location>
</feature>
<feature type="binding site" evidence="1">
    <location>
        <position position="513"/>
    </location>
    <ligand>
        <name>ATP</name>
        <dbReference type="ChEBI" id="CHEBI:30616"/>
    </ligand>
</feature>
<name>SYV_PICTO</name>
<evidence type="ECO:0000255" key="1">
    <source>
        <dbReference type="HAMAP-Rule" id="MF_02005"/>
    </source>
</evidence>
<keyword id="KW-0030">Aminoacyl-tRNA synthetase</keyword>
<keyword id="KW-0067">ATP-binding</keyword>
<keyword id="KW-0963">Cytoplasm</keyword>
<keyword id="KW-0436">Ligase</keyword>
<keyword id="KW-0547">Nucleotide-binding</keyword>
<keyword id="KW-0648">Protein biosynthesis</keyword>
<organism>
    <name type="scientific">Picrophilus torridus (strain ATCC 700027 / DSM 9790 / JCM 10055 / NBRC 100828 / KAW 2/3)</name>
    <dbReference type="NCBI Taxonomy" id="1122961"/>
    <lineage>
        <taxon>Archaea</taxon>
        <taxon>Methanobacteriati</taxon>
        <taxon>Thermoplasmatota</taxon>
        <taxon>Thermoplasmata</taxon>
        <taxon>Thermoplasmatales</taxon>
        <taxon>Picrophilaceae</taxon>
        <taxon>Picrophilus</taxon>
    </lineage>
</organism>
<sequence length="768" mass="89456">MLDINEMENKWKDYWFNNDVFKFRPGNKIFIIDTPPPTVSGKMHMGHAYSYPHQDFMARYMRMKGFSVYYPWGFDDNGLPTERYVEKERHVTIRNTPLDEYIKICREASRDAEKILLKNWYDLGLSCDFKNYIETSSDFSTRISQELFIDLVLNNRAYRAEAPVIRCPTCNTAISQIDMKDTEIDTDLVYINFSGIEIATTRPELLGACVALVVNPNDPRYKKIINSEVVVPLYNYTVRIISDDSIDMNFGTGAEMLCTFGDQHDLELWRKYNPGTRIIIKNDLIDDGIIIKGLSVKEARKEIIKKLKENNYLIKTERIKHSVNTHERCGTPVEIIISKQWYIKDLDIKDELLDLGNRIEWIPDYMKTRYQNWVSGLKWDWCISRQRYYGIPFPVWYCKDCGGIVLADKSELPVDPRLSGTNKRCSCGSGNLEPETDVMDTWATSSISVTLYLMHINSMNLYPADVRFQGHDIITSWAFTTILRSYLHYRDVPWKKIFISGNVYDPYGEKMSKSKGNIIEPSTIIEKYGADALRFWASTTMPGENIKIREQDLVRGRKTVIKLYNSARLVLMLSDNIKGSMDNIISQVNRWILTKFEKTLKNVTELMDGYYFSRARSELDNFFWNIFCDNYLEIIKSEIKRYPEETAAVSRFLMENIIKMYSPIMPFITEELYHEFNKDSLSVSLEKYPEYNEDYIFDGAEDFDYIIDIINKIRAIKSNMKMSMAAPISISLKGNEKIINDSAEIIKSVMHVENLKISNSDNIEIEVQ</sequence>
<comment type="function">
    <text evidence="1">Catalyzes the attachment of valine to tRNA(Val). As ValRS can inadvertently accommodate and process structurally similar amino acids such as threonine, to avoid such errors, it has a 'posttransfer' editing activity that hydrolyzes mischarged Thr-tRNA(Val) in a tRNA-dependent manner.</text>
</comment>
<comment type="catalytic activity">
    <reaction evidence="1">
        <text>tRNA(Val) + L-valine + ATP = L-valyl-tRNA(Val) + AMP + diphosphate</text>
        <dbReference type="Rhea" id="RHEA:10704"/>
        <dbReference type="Rhea" id="RHEA-COMP:9672"/>
        <dbReference type="Rhea" id="RHEA-COMP:9708"/>
        <dbReference type="ChEBI" id="CHEBI:30616"/>
        <dbReference type="ChEBI" id="CHEBI:33019"/>
        <dbReference type="ChEBI" id="CHEBI:57762"/>
        <dbReference type="ChEBI" id="CHEBI:78442"/>
        <dbReference type="ChEBI" id="CHEBI:78537"/>
        <dbReference type="ChEBI" id="CHEBI:456215"/>
        <dbReference type="EC" id="6.1.1.9"/>
    </reaction>
</comment>
<comment type="subcellular location">
    <subcellularLocation>
        <location evidence="1">Cytoplasm</location>
    </subcellularLocation>
</comment>
<comment type="domain">
    <text evidence="1">ValRS has two distinct active sites: one for aminoacylation and one for editing. The misactivated threonine is translocated from the active site to the editing site.</text>
</comment>
<comment type="similarity">
    <text evidence="1">Belongs to the class-I aminoacyl-tRNA synthetase family. ValS type 2 subfamily.</text>
</comment>
<reference key="1">
    <citation type="journal article" date="2004" name="Proc. Natl. Acad. Sci. U.S.A.">
        <title>Genome sequence of Picrophilus torridus and its implications for life around pH 0.</title>
        <authorList>
            <person name="Fuetterer O."/>
            <person name="Angelov A."/>
            <person name="Liesegang H."/>
            <person name="Gottschalk G."/>
            <person name="Schleper C."/>
            <person name="Schepers B."/>
            <person name="Dock C."/>
            <person name="Antranikian G."/>
            <person name="Liebl W."/>
        </authorList>
    </citation>
    <scope>NUCLEOTIDE SEQUENCE [LARGE SCALE GENOMIC DNA]</scope>
    <source>
        <strain>ATCC 700027 / DSM 9790 / JCM 10055 / NBRC 100828 / KAW 2/3</strain>
    </source>
</reference>